<organism>
    <name type="scientific">Pyrococcus furiosus (strain ATCC 43587 / DSM 3638 / JCM 8422 / Vc1)</name>
    <dbReference type="NCBI Taxonomy" id="186497"/>
    <lineage>
        <taxon>Archaea</taxon>
        <taxon>Methanobacteriati</taxon>
        <taxon>Methanobacteriota</taxon>
        <taxon>Thermococci</taxon>
        <taxon>Thermococcales</taxon>
        <taxon>Thermococcaceae</taxon>
        <taxon>Pyrococcus</taxon>
    </lineage>
</organism>
<gene>
    <name type="ordered locus">PF1724</name>
</gene>
<keyword id="KW-0460">Magnesium</keyword>
<keyword id="KW-0479">Metal-binding</keyword>
<keyword id="KW-1185">Reference proteome</keyword>
<accession>Q8U077</accession>
<evidence type="ECO:0000255" key="1">
    <source>
        <dbReference type="HAMAP-Rule" id="MF_01095"/>
    </source>
</evidence>
<reference key="1">
    <citation type="journal article" date="1999" name="Genetics">
        <title>Divergence of the hyperthermophilic archaea Pyrococcus furiosus and P. horikoshii inferred from complete genomic sequences.</title>
        <authorList>
            <person name="Maeder D.L."/>
            <person name="Weiss R.B."/>
            <person name="Dunn D.M."/>
            <person name="Cherry J.L."/>
            <person name="Gonzalez J.M."/>
            <person name="DiRuggiero J."/>
            <person name="Robb F.T."/>
        </authorList>
    </citation>
    <scope>NUCLEOTIDE SEQUENCE [LARGE SCALE GENOMIC DNA]</scope>
    <source>
        <strain>ATCC 43587 / DSM 3638 / JCM 8422 / Vc1</strain>
    </source>
</reference>
<sequence>MYPENYEKFEKIIERLREFKGVIIVEGKRDEDSLRKLGVQTEILRLSRSSLADVALLASEHEEVMILTDFDETGEKLAKRLYDLLVGLTKVDMETRRELQFIASKDAKGIEDLYDLWESLRLRFWAPKEGD</sequence>
<comment type="cofactor">
    <cofactor evidence="1">
        <name>Mg(2+)</name>
        <dbReference type="ChEBI" id="CHEBI:18420"/>
    </cofactor>
    <text evidence="1">Binds two Mg(2+) per subunit.</text>
</comment>
<comment type="similarity">
    <text evidence="1">Belongs to the UPF0292 family.</text>
</comment>
<protein>
    <recommendedName>
        <fullName evidence="1">UPF0292 protein PF1724</fullName>
    </recommendedName>
</protein>
<proteinExistence type="inferred from homology"/>
<dbReference type="EMBL" id="AE009950">
    <property type="protein sequence ID" value="AAL81848.1"/>
    <property type="molecule type" value="Genomic_DNA"/>
</dbReference>
<dbReference type="RefSeq" id="WP_011012870.1">
    <property type="nucleotide sequence ID" value="NZ_CP023154.1"/>
</dbReference>
<dbReference type="SMR" id="Q8U077"/>
<dbReference type="STRING" id="186497.PF1724"/>
<dbReference type="PaxDb" id="186497-PF1724"/>
<dbReference type="KEGG" id="pfu:PF1724"/>
<dbReference type="PATRIC" id="fig|186497.12.peg.1792"/>
<dbReference type="eggNOG" id="arCOG01486">
    <property type="taxonomic scope" value="Archaea"/>
</dbReference>
<dbReference type="HOGENOM" id="CLU_140789_3_0_2"/>
<dbReference type="OrthoDB" id="56459at2157"/>
<dbReference type="PhylomeDB" id="Q8U077"/>
<dbReference type="Proteomes" id="UP000001013">
    <property type="component" value="Chromosome"/>
</dbReference>
<dbReference type="GO" id="GO:0046872">
    <property type="term" value="F:metal ion binding"/>
    <property type="evidence" value="ECO:0007669"/>
    <property type="project" value="UniProtKB-KW"/>
</dbReference>
<dbReference type="CDD" id="cd01027">
    <property type="entry name" value="TOPRIM_RNase_M5_like"/>
    <property type="match status" value="1"/>
</dbReference>
<dbReference type="Gene3D" id="3.40.1360.10">
    <property type="match status" value="1"/>
</dbReference>
<dbReference type="HAMAP" id="MF_01095">
    <property type="entry name" value="UPF0292"/>
    <property type="match status" value="1"/>
</dbReference>
<dbReference type="InterPro" id="IPR006171">
    <property type="entry name" value="TOPRIM_dom"/>
</dbReference>
<dbReference type="InterPro" id="IPR034141">
    <property type="entry name" value="TOPRIM_RNase_M5-like"/>
</dbReference>
<dbReference type="InterPro" id="IPR022972">
    <property type="entry name" value="UPF0292"/>
</dbReference>
<dbReference type="NCBIfam" id="NF003090">
    <property type="entry name" value="PRK04017.1-1"/>
    <property type="match status" value="1"/>
</dbReference>
<dbReference type="PANTHER" id="PTHR39964:SF2">
    <property type="entry name" value="UPF0292 PROTEIN MJ1624"/>
    <property type="match status" value="1"/>
</dbReference>
<dbReference type="PANTHER" id="PTHR39964">
    <property type="entry name" value="UPF0292 PROTEIN TK1411"/>
    <property type="match status" value="1"/>
</dbReference>
<dbReference type="Pfam" id="PF01751">
    <property type="entry name" value="Toprim"/>
    <property type="match status" value="1"/>
</dbReference>
<dbReference type="SMART" id="SM00493">
    <property type="entry name" value="TOPRIM"/>
    <property type="match status" value="1"/>
</dbReference>
<dbReference type="SUPFAM" id="SSF110455">
    <property type="entry name" value="Toprim domain"/>
    <property type="match status" value="1"/>
</dbReference>
<dbReference type="PROSITE" id="PS50880">
    <property type="entry name" value="TOPRIM"/>
    <property type="match status" value="1"/>
</dbReference>
<feature type="chain" id="PRO_0000143955" description="UPF0292 protein PF1724">
    <location>
        <begin position="1"/>
        <end position="131"/>
    </location>
</feature>
<feature type="domain" description="Toprim" evidence="1">
    <location>
        <begin position="20"/>
        <end position="103"/>
    </location>
</feature>
<feature type="binding site" evidence="1">
    <location>
        <position position="26"/>
    </location>
    <ligand>
        <name>Mg(2+)</name>
        <dbReference type="ChEBI" id="CHEBI:18420"/>
        <label>1</label>
        <note>catalytic</note>
    </ligand>
</feature>
<feature type="binding site" evidence="1">
    <location>
        <position position="69"/>
    </location>
    <ligand>
        <name>Mg(2+)</name>
        <dbReference type="ChEBI" id="CHEBI:18420"/>
        <label>1</label>
        <note>catalytic</note>
    </ligand>
</feature>
<feature type="binding site" evidence="1">
    <location>
        <position position="69"/>
    </location>
    <ligand>
        <name>Mg(2+)</name>
        <dbReference type="ChEBI" id="CHEBI:18420"/>
        <label>2</label>
    </ligand>
</feature>
<feature type="binding site" evidence="1">
    <location>
        <position position="71"/>
    </location>
    <ligand>
        <name>Mg(2+)</name>
        <dbReference type="ChEBI" id="CHEBI:18420"/>
        <label>2</label>
    </ligand>
</feature>
<name>Y1724_PYRFU</name>